<protein>
    <recommendedName>
        <fullName evidence="1">UDP-3-O-acyl-N-acetylglucosamine deacetylase</fullName>
        <shortName evidence="1">UDP-3-O-acyl-GlcNAc deacetylase</shortName>
        <ecNumber evidence="1">3.5.1.108</ecNumber>
    </recommendedName>
    <alternativeName>
        <fullName evidence="1">UDP-3-O-[R-3-hydroxymyristoyl]-N-acetylglucosamine deacetylase</fullName>
    </alternativeName>
</protein>
<reference key="1">
    <citation type="journal article" date="2003" name="Proc. Natl. Acad. Sci. U.S.A.">
        <title>Complete genome sequence of the Q-fever pathogen, Coxiella burnetii.</title>
        <authorList>
            <person name="Seshadri R."/>
            <person name="Paulsen I.T."/>
            <person name="Eisen J.A."/>
            <person name="Read T.D."/>
            <person name="Nelson K.E."/>
            <person name="Nelson W.C."/>
            <person name="Ward N.L."/>
            <person name="Tettelin H."/>
            <person name="Davidsen T.M."/>
            <person name="Beanan M.J."/>
            <person name="DeBoy R.T."/>
            <person name="Daugherty S.C."/>
            <person name="Brinkac L.M."/>
            <person name="Madupu R."/>
            <person name="Dodson R.J."/>
            <person name="Khouri H.M."/>
            <person name="Lee K.H."/>
            <person name="Carty H.A."/>
            <person name="Scanlan D."/>
            <person name="Heinzen R.A."/>
            <person name="Thompson H.A."/>
            <person name="Samuel J.E."/>
            <person name="Fraser C.M."/>
            <person name="Heidelberg J.F."/>
        </authorList>
    </citation>
    <scope>NUCLEOTIDE SEQUENCE [LARGE SCALE GENOMIC DNA]</scope>
    <source>
        <strain>RSA 493 / Nine Mile phase I</strain>
    </source>
</reference>
<name>LPXC_COXBU</name>
<gene>
    <name evidence="1" type="primary">lpxC</name>
    <name type="ordered locus">CBU_0142</name>
</gene>
<keyword id="KW-0378">Hydrolase</keyword>
<keyword id="KW-0441">Lipid A biosynthesis</keyword>
<keyword id="KW-0444">Lipid biosynthesis</keyword>
<keyword id="KW-0443">Lipid metabolism</keyword>
<keyword id="KW-0479">Metal-binding</keyword>
<keyword id="KW-1185">Reference proteome</keyword>
<keyword id="KW-0862">Zinc</keyword>
<dbReference type="EC" id="3.5.1.108" evidence="1"/>
<dbReference type="EMBL" id="AE016828">
    <property type="protein sequence ID" value="AAO89706.1"/>
    <property type="molecule type" value="Genomic_DNA"/>
</dbReference>
<dbReference type="RefSeq" id="NP_819192.1">
    <property type="nucleotide sequence ID" value="NC_002971.4"/>
</dbReference>
<dbReference type="RefSeq" id="WP_010957401.1">
    <property type="nucleotide sequence ID" value="NZ_CDBG01000001.1"/>
</dbReference>
<dbReference type="SMR" id="Q83F11"/>
<dbReference type="STRING" id="227377.CBU_0142"/>
<dbReference type="EnsemblBacteria" id="AAO89706">
    <property type="protein sequence ID" value="AAO89706"/>
    <property type="gene ID" value="CBU_0142"/>
</dbReference>
<dbReference type="GeneID" id="1208013"/>
<dbReference type="KEGG" id="cbu:CBU_0142"/>
<dbReference type="PATRIC" id="fig|227377.7.peg.144"/>
<dbReference type="eggNOG" id="COG0774">
    <property type="taxonomic scope" value="Bacteria"/>
</dbReference>
<dbReference type="HOGENOM" id="CLU_046528_1_0_6"/>
<dbReference type="OrthoDB" id="9802746at2"/>
<dbReference type="UniPathway" id="UPA00359">
    <property type="reaction ID" value="UER00478"/>
</dbReference>
<dbReference type="Proteomes" id="UP000002671">
    <property type="component" value="Chromosome"/>
</dbReference>
<dbReference type="GO" id="GO:0016020">
    <property type="term" value="C:membrane"/>
    <property type="evidence" value="ECO:0007669"/>
    <property type="project" value="GOC"/>
</dbReference>
<dbReference type="GO" id="GO:0046872">
    <property type="term" value="F:metal ion binding"/>
    <property type="evidence" value="ECO:0007669"/>
    <property type="project" value="UniProtKB-KW"/>
</dbReference>
<dbReference type="GO" id="GO:0103117">
    <property type="term" value="F:UDP-3-O-acyl-N-acetylglucosamine deacetylase activity"/>
    <property type="evidence" value="ECO:0007669"/>
    <property type="project" value="UniProtKB-UniRule"/>
</dbReference>
<dbReference type="GO" id="GO:0009245">
    <property type="term" value="P:lipid A biosynthetic process"/>
    <property type="evidence" value="ECO:0007669"/>
    <property type="project" value="UniProtKB-UniRule"/>
</dbReference>
<dbReference type="Gene3D" id="3.30.230.20">
    <property type="entry name" value="lpxc deacetylase, domain 1"/>
    <property type="match status" value="1"/>
</dbReference>
<dbReference type="Gene3D" id="3.30.1700.10">
    <property type="entry name" value="lpxc deacetylase, domain 2"/>
    <property type="match status" value="1"/>
</dbReference>
<dbReference type="HAMAP" id="MF_00388">
    <property type="entry name" value="LpxC"/>
    <property type="match status" value="1"/>
</dbReference>
<dbReference type="InterPro" id="IPR020568">
    <property type="entry name" value="Ribosomal_Su5_D2-typ_SF"/>
</dbReference>
<dbReference type="InterPro" id="IPR004463">
    <property type="entry name" value="UDP-acyl_GlcNac_deAcase"/>
</dbReference>
<dbReference type="InterPro" id="IPR011334">
    <property type="entry name" value="UDP-acyl_GlcNac_deAcase_C"/>
</dbReference>
<dbReference type="InterPro" id="IPR015870">
    <property type="entry name" value="UDP-acyl_N-AcGlcN_deAcase_N"/>
</dbReference>
<dbReference type="NCBIfam" id="TIGR00325">
    <property type="entry name" value="lpxC"/>
    <property type="match status" value="1"/>
</dbReference>
<dbReference type="PANTHER" id="PTHR33694">
    <property type="entry name" value="UDP-3-O-ACYL-N-ACETYLGLUCOSAMINE DEACETYLASE 1, MITOCHONDRIAL-RELATED"/>
    <property type="match status" value="1"/>
</dbReference>
<dbReference type="PANTHER" id="PTHR33694:SF1">
    <property type="entry name" value="UDP-3-O-ACYL-N-ACETYLGLUCOSAMINE DEACETYLASE 1, MITOCHONDRIAL-RELATED"/>
    <property type="match status" value="1"/>
</dbReference>
<dbReference type="Pfam" id="PF03331">
    <property type="entry name" value="LpxC"/>
    <property type="match status" value="1"/>
</dbReference>
<dbReference type="SUPFAM" id="SSF54211">
    <property type="entry name" value="Ribosomal protein S5 domain 2-like"/>
    <property type="match status" value="2"/>
</dbReference>
<sequence>MIKQRTLKNVVRATGVGVHTGEKVYLTLRPAPPNTGIIFCRTDLDPVVQIPARVNYIGDTSLSTCLTKGDVRIATVEHLLSALAGVGVDNLYIDLTSPELPIMDGSAGPFVFLIQSAGIEEQNAPKEFIRIKQRVKIEEADKSVMVEPYNGFKISFGIDFDHPLFNEHNQNATLDFSSTSYVKEVSRARTFGFLSDYEFIRKNNLALGASLDNALVLDEYKILNQDGLRYPDEFVKHKILDVIGDLYLLGRSLIGSFSGVKSGHTLNSQLLKQLLATKSAWEIVTFKDPSELPFAYTPVAMTA</sequence>
<comment type="function">
    <text evidence="1">Catalyzes the hydrolysis of UDP-3-O-myristoyl-N-acetylglucosamine to form UDP-3-O-myristoylglucosamine and acetate, the committed step in lipid A biosynthesis.</text>
</comment>
<comment type="catalytic activity">
    <reaction evidence="1">
        <text>a UDP-3-O-[(3R)-3-hydroxyacyl]-N-acetyl-alpha-D-glucosamine + H2O = a UDP-3-O-[(3R)-3-hydroxyacyl]-alpha-D-glucosamine + acetate</text>
        <dbReference type="Rhea" id="RHEA:67816"/>
        <dbReference type="ChEBI" id="CHEBI:15377"/>
        <dbReference type="ChEBI" id="CHEBI:30089"/>
        <dbReference type="ChEBI" id="CHEBI:137740"/>
        <dbReference type="ChEBI" id="CHEBI:173225"/>
        <dbReference type="EC" id="3.5.1.108"/>
    </reaction>
</comment>
<comment type="cofactor">
    <cofactor evidence="1">
        <name>Zn(2+)</name>
        <dbReference type="ChEBI" id="CHEBI:29105"/>
    </cofactor>
</comment>
<comment type="pathway">
    <text evidence="1">Glycolipid biosynthesis; lipid IV(A) biosynthesis; lipid IV(A) from (3R)-3-hydroxytetradecanoyl-[acyl-carrier-protein] and UDP-N-acetyl-alpha-D-glucosamine: step 2/6.</text>
</comment>
<comment type="similarity">
    <text evidence="1">Belongs to the LpxC family.</text>
</comment>
<feature type="chain" id="PRO_0000191928" description="UDP-3-O-acyl-N-acetylglucosamine deacetylase">
    <location>
        <begin position="1"/>
        <end position="303"/>
    </location>
</feature>
<feature type="active site" description="Proton donor" evidence="1">
    <location>
        <position position="264"/>
    </location>
</feature>
<feature type="binding site" evidence="1">
    <location>
        <position position="78"/>
    </location>
    <ligand>
        <name>Zn(2+)</name>
        <dbReference type="ChEBI" id="CHEBI:29105"/>
    </ligand>
</feature>
<feature type="binding site" evidence="1">
    <location>
        <position position="237"/>
    </location>
    <ligand>
        <name>Zn(2+)</name>
        <dbReference type="ChEBI" id="CHEBI:29105"/>
    </ligand>
</feature>
<feature type="binding site" evidence="1">
    <location>
        <position position="241"/>
    </location>
    <ligand>
        <name>Zn(2+)</name>
        <dbReference type="ChEBI" id="CHEBI:29105"/>
    </ligand>
</feature>
<accession>Q83F11</accession>
<organism>
    <name type="scientific">Coxiella burnetii (strain RSA 493 / Nine Mile phase I)</name>
    <dbReference type="NCBI Taxonomy" id="227377"/>
    <lineage>
        <taxon>Bacteria</taxon>
        <taxon>Pseudomonadati</taxon>
        <taxon>Pseudomonadota</taxon>
        <taxon>Gammaproteobacteria</taxon>
        <taxon>Legionellales</taxon>
        <taxon>Coxiellaceae</taxon>
        <taxon>Coxiella</taxon>
    </lineage>
</organism>
<evidence type="ECO:0000255" key="1">
    <source>
        <dbReference type="HAMAP-Rule" id="MF_00388"/>
    </source>
</evidence>
<proteinExistence type="inferred from homology"/>